<gene>
    <name type="primary">cas3</name>
    <name type="synonym">cas3''</name>
    <name type="ordered locus">MJ0384</name>
</gene>
<comment type="function">
    <text evidence="2">CRISPR (clustered regularly interspaced short palindromic repeat), is an adaptive immune system that provides protection against mobile genetic elements (viruses, transposable elements and conjugative plasmids). CRISPR clusters contain sequences complementary to antecedent mobile elements and target invading nucleic acids. CRISPR clusters are transcribed and processed into CRISPR RNA (crRNA). Cas3 plus Cascade participate in CRISPR interference, the third stage of CRISPR immunity. Acts as a ssDNA and ssRNA nuclease, with both endo- and 3' to 5' exonuclease activities, acting on substrates with free single-stranded 3' ends. Double-stranded nucleic acids are not substrates. Activity is higher for DNA than RNA. Templates include R-loops (a bubble-like structure formed when ssRNA replaces one strand in a dsDNA, such as crRNA is thought to form with CRISPR target DNA), circular ssDNA, 2',3'-cAMP and 2',3'-cGMP. Probably generates 3'-phosphate and 5'-hydroxyl ends. In the presence of the Cas3 helicase and ATP dsDNA templates are also degraded.</text>
</comment>
<comment type="cofactor">
    <cofactor evidence="2">
        <name>Mg(2+)</name>
        <dbReference type="ChEBI" id="CHEBI:18420"/>
    </cofactor>
    <text evidence="2">ssDNase activity requires Mg(2+), ssRNase activity does not require cations. A second loosely associated metal ion is visible in the crystal structure.</text>
</comment>
<comment type="activity regulation">
    <text evidence="2">Both ssDNase and ssRNase are inhibited by EDTA.</text>
</comment>
<comment type="biophysicochemical properties">
    <phDependence>
        <text evidence="2">Optimum pH is 7-9, varying somewhat depending on the substrate.</text>
    </phDependence>
</comment>
<comment type="subunit">
    <text evidence="2">Monomer.</text>
</comment>
<comment type="domain">
    <text>Proteins of this family have an N-terminal nuclease domain and a C-terminal helicase/ATPase domain. In some CRISPR/Cas systems the domains are swapped, in others they are encoded separately.</text>
</comment>
<comment type="similarity">
    <text evidence="3">Belongs to the CRISPR-associated nuclease Cas3-HD family.</text>
</comment>
<organism>
    <name type="scientific">Methanocaldococcus jannaschii (strain ATCC 43067 / DSM 2661 / JAL-1 / JCM 10045 / NBRC 100440)</name>
    <name type="common">Methanococcus jannaschii</name>
    <dbReference type="NCBI Taxonomy" id="243232"/>
    <lineage>
        <taxon>Archaea</taxon>
        <taxon>Methanobacteriati</taxon>
        <taxon>Methanobacteriota</taxon>
        <taxon>Methanomada group</taxon>
        <taxon>Methanococci</taxon>
        <taxon>Methanococcales</taxon>
        <taxon>Methanocaldococcaceae</taxon>
        <taxon>Methanocaldococcus</taxon>
    </lineage>
</organism>
<accession>Q57829</accession>
<evidence type="ECO:0000255" key="1">
    <source>
        <dbReference type="PROSITE-ProRule" id="PRU00974"/>
    </source>
</evidence>
<evidence type="ECO:0000269" key="2">
    <source>
    </source>
</evidence>
<evidence type="ECO:0000305" key="3"/>
<evidence type="ECO:0007829" key="4">
    <source>
        <dbReference type="PDB" id="3S4L"/>
    </source>
</evidence>
<keyword id="KW-0002">3D-structure</keyword>
<keyword id="KW-0051">Antiviral defense</keyword>
<keyword id="KW-0255">Endonuclease</keyword>
<keyword id="KW-0269">Exonuclease</keyword>
<keyword id="KW-0378">Hydrolase</keyword>
<keyword id="KW-0460">Magnesium</keyword>
<keyword id="KW-0479">Metal-binding</keyword>
<keyword id="KW-0540">Nuclease</keyword>
<keyword id="KW-1185">Reference proteome</keyword>
<feature type="chain" id="PRO_0000106847" description="CRISPR-associated endonuclease Cas3-HD">
    <location>
        <begin position="1"/>
        <end position="244"/>
    </location>
</feature>
<feature type="domain" description="HD Cas3-type" evidence="1">
    <location>
        <begin position="10"/>
        <end position="221"/>
    </location>
</feature>
<feature type="binding site">
    <location>
        <position position="67"/>
    </location>
    <ligand>
        <name>Mg(2+)</name>
        <dbReference type="ChEBI" id="CHEBI:18420"/>
        <note>catalytic</note>
    </ligand>
</feature>
<feature type="binding site">
    <location>
        <position position="91"/>
    </location>
    <ligand>
        <name>Mg(2+)</name>
        <dbReference type="ChEBI" id="CHEBI:18420"/>
        <note>catalytic</note>
    </ligand>
</feature>
<feature type="binding site">
    <location>
        <position position="123"/>
    </location>
    <ligand>
        <name>Mg(2+)</name>
        <dbReference type="ChEBI" id="CHEBI:18420"/>
        <note>catalytic</note>
    </ligand>
</feature>
<feature type="binding site">
    <location>
        <position position="124"/>
    </location>
    <ligand>
        <name>Mg(2+)</name>
        <dbReference type="ChEBI" id="CHEBI:18420"/>
        <note>catalytic</note>
    </ligand>
</feature>
<feature type="mutagenesis site" description="Loss of all nuclease activity." evidence="2">
    <original>H</original>
    <variation>A</variation>
    <location>
        <position position="20"/>
    </location>
</feature>
<feature type="mutagenesis site" description="Loss of all nuclease activity." evidence="2">
    <original>H</original>
    <variation>A</variation>
    <location>
        <position position="66"/>
    </location>
</feature>
<feature type="mutagenesis site" description="Loss of all nuclease activity." evidence="2">
    <original>D</original>
    <variation>A</variation>
    <location>
        <position position="67"/>
    </location>
</feature>
<feature type="mutagenesis site" description="Very little nuclease activity." evidence="2">
    <original>D</original>
    <variation>E</variation>
    <location>
        <position position="67"/>
    </location>
</feature>
<feature type="mutagenesis site" description="Very little ssDNA exonuclease activity." evidence="2">
    <original>H</original>
    <variation>A</variation>
    <location>
        <position position="91"/>
    </location>
</feature>
<feature type="mutagenesis site" description="Very little nuclease activity." evidence="2">
    <original>H</original>
    <variation>A</variation>
    <location>
        <position position="123"/>
    </location>
</feature>
<feature type="mutagenesis site" description="Very little nuclease activity." evidence="2">
    <original>H</original>
    <variation>A</variation>
    <location>
        <position position="124"/>
    </location>
</feature>
<feature type="mutagenesis site" description="Loss of all nuclease activity." evidence="2">
    <original>D</original>
    <variation>A</variation>
    <location>
        <position position="219"/>
    </location>
</feature>
<feature type="strand" evidence="4">
    <location>
        <begin position="10"/>
        <end position="12"/>
    </location>
</feature>
<feature type="helix" evidence="4">
    <location>
        <begin position="17"/>
        <end position="31"/>
    </location>
</feature>
<feature type="helix" evidence="4">
    <location>
        <begin position="32"/>
        <end position="34"/>
    </location>
</feature>
<feature type="helix" evidence="4">
    <location>
        <begin position="36"/>
        <end position="43"/>
    </location>
</feature>
<feature type="helix" evidence="4">
    <location>
        <begin position="44"/>
        <end position="46"/>
    </location>
</feature>
<feature type="helix" evidence="4">
    <location>
        <begin position="52"/>
        <end position="65"/>
    </location>
</feature>
<feature type="helix" evidence="4">
    <location>
        <begin position="68"/>
        <end position="71"/>
    </location>
</feature>
<feature type="helix" evidence="4">
    <location>
        <begin position="73"/>
        <end position="80"/>
    </location>
</feature>
<feature type="strand" evidence="4">
    <location>
        <begin position="82"/>
        <end position="84"/>
    </location>
</feature>
<feature type="helix" evidence="4">
    <location>
        <begin position="91"/>
        <end position="107"/>
    </location>
</feature>
<feature type="helix" evidence="4">
    <location>
        <begin position="110"/>
        <end position="121"/>
    </location>
</feature>
<feature type="turn" evidence="4">
    <location>
        <begin position="122"/>
        <end position="124"/>
    </location>
</feature>
<feature type="helix" evidence="4">
    <location>
        <begin position="142"/>
        <end position="149"/>
    </location>
</feature>
<feature type="helix" evidence="4">
    <location>
        <begin position="159"/>
        <end position="167"/>
    </location>
</feature>
<feature type="helix" evidence="4">
    <location>
        <begin position="181"/>
        <end position="197"/>
    </location>
</feature>
<feature type="turn" evidence="4">
    <location>
        <begin position="201"/>
        <end position="203"/>
    </location>
</feature>
<feature type="helix" evidence="4">
    <location>
        <begin position="204"/>
        <end position="215"/>
    </location>
</feature>
<proteinExistence type="evidence at protein level"/>
<reference key="1">
    <citation type="journal article" date="1996" name="Science">
        <title>Complete genome sequence of the methanogenic archaeon, Methanococcus jannaschii.</title>
        <authorList>
            <person name="Bult C.J."/>
            <person name="White O."/>
            <person name="Olsen G.J."/>
            <person name="Zhou L."/>
            <person name="Fleischmann R.D."/>
            <person name="Sutton G.G."/>
            <person name="Blake J.A."/>
            <person name="FitzGerald L.M."/>
            <person name="Clayton R.A."/>
            <person name="Gocayne J.D."/>
            <person name="Kerlavage A.R."/>
            <person name="Dougherty B.A."/>
            <person name="Tomb J.-F."/>
            <person name="Adams M.D."/>
            <person name="Reich C.I."/>
            <person name="Overbeek R."/>
            <person name="Kirkness E.F."/>
            <person name="Weinstock K.G."/>
            <person name="Merrick J.M."/>
            <person name="Glodek A."/>
            <person name="Scott J.L."/>
            <person name="Geoghagen N.S.M."/>
            <person name="Weidman J.F."/>
            <person name="Fuhrmann J.L."/>
            <person name="Nguyen D."/>
            <person name="Utterback T.R."/>
            <person name="Kelley J.M."/>
            <person name="Peterson J.D."/>
            <person name="Sadow P.W."/>
            <person name="Hanna M.C."/>
            <person name="Cotton M.D."/>
            <person name="Roberts K.M."/>
            <person name="Hurst M.A."/>
            <person name="Kaine B.P."/>
            <person name="Borodovsky M."/>
            <person name="Klenk H.-P."/>
            <person name="Fraser C.M."/>
            <person name="Smith H.O."/>
            <person name="Woese C.R."/>
            <person name="Venter J.C."/>
        </authorList>
    </citation>
    <scope>NUCLEOTIDE SEQUENCE [LARGE SCALE GENOMIC DNA]</scope>
    <source>
        <strain>ATCC 43067 / DSM 2661 / JAL-1 / JCM 10045 / NBRC 100440</strain>
    </source>
</reference>
<reference key="2">
    <citation type="journal article" date="2011" name="EMBO J.">
        <title>Structure and activity of the Cas3 HD nuclease MJ0384, an effector enzyme of the CRISPR interference.</title>
        <authorList>
            <person name="Beloglazova N."/>
            <person name="Petit P."/>
            <person name="Flick R."/>
            <person name="Brown G."/>
            <person name="Savchenko A."/>
            <person name="Yakunin A.F."/>
        </authorList>
    </citation>
    <scope>X-RAY CRYSTALLOGRAPHY (2.3 ANGSTROMS)</scope>
    <scope>FUNCTION AS A NUCLEASE</scope>
    <scope>COFACTOR</scope>
    <scope>SUBSTRATES</scope>
    <scope>BIOPHYSICOCHEMICAL PROPERTIES</scope>
    <scope>ACTIVITY REGULATION</scope>
    <scope>SUBUNIT</scope>
    <scope>MUTAGENESIS OF HIS-20; HIS-66; ASP-67; HIS-91; HIS-123; HIS-124 AND ASP-219</scope>
    <source>
        <strain>ATCC 43067 / DSM 2661 / JAL-1 / JCM 10045 / NBRC 100440</strain>
    </source>
</reference>
<protein>
    <recommendedName>
        <fullName>CRISPR-associated endonuclease Cas3-HD</fullName>
        <ecNumber>3.1.-.-</ecNumber>
    </recommendedName>
    <alternativeName>
        <fullName>CRISPR-associated ssDNA/ssRNA endonuclease Cas3-HD</fullName>
    </alternativeName>
</protein>
<name>CS3HD_METJA</name>
<sequence length="244" mass="28406">MILGEIMEVLAFKNQSLIDHVNDMVKYWERIKYRYLKTIKRALEALNIKLDIEKVDEFMKILIKLHDIGKASKIYQRAIINDQEKLMGFRHELVSAYYTYHILLKKFGDKNLAFIGALTVMLHHEPIIMGQIRNLKKKELTAEVVLDKLKKFDGMIEDFEDLIKKLIGYSIGDIIKNDSNKDDIIRFVIEMSVRARHTPNSEKLRFIVGTLLLPLVMCDYKGAESREGKAPKFAEVLEVESYVI</sequence>
<dbReference type="EC" id="3.1.-.-"/>
<dbReference type="EMBL" id="L77117">
    <property type="protein sequence ID" value="AAB98379.1"/>
    <property type="molecule type" value="Genomic_DNA"/>
</dbReference>
<dbReference type="PIR" id="H64347">
    <property type="entry name" value="H64347"/>
</dbReference>
<dbReference type="PDB" id="3S4L">
    <property type="method" value="X-ray"/>
    <property type="resolution" value="2.30 A"/>
    <property type="chains" value="A=1-244"/>
</dbReference>
<dbReference type="PDBsum" id="3S4L"/>
<dbReference type="SMR" id="Q57829"/>
<dbReference type="STRING" id="243232.MJ_0384"/>
<dbReference type="PaxDb" id="243232-MJ_0384"/>
<dbReference type="DNASU" id="1451241"/>
<dbReference type="EnsemblBacteria" id="AAB98379">
    <property type="protein sequence ID" value="AAB98379"/>
    <property type="gene ID" value="MJ_0384"/>
</dbReference>
<dbReference type="KEGG" id="mja:MJ_0384"/>
<dbReference type="eggNOG" id="arCOG01442">
    <property type="taxonomic scope" value="Archaea"/>
</dbReference>
<dbReference type="HOGENOM" id="CLU_1052127_0_0_2"/>
<dbReference type="InParanoid" id="Q57829"/>
<dbReference type="OrthoDB" id="99692at2157"/>
<dbReference type="PhylomeDB" id="Q57829"/>
<dbReference type="EvolutionaryTrace" id="Q57829"/>
<dbReference type="Proteomes" id="UP000000805">
    <property type="component" value="Chromosome"/>
</dbReference>
<dbReference type="GO" id="GO:0004519">
    <property type="term" value="F:endonuclease activity"/>
    <property type="evidence" value="ECO:0007669"/>
    <property type="project" value="UniProtKB-KW"/>
</dbReference>
<dbReference type="GO" id="GO:0004527">
    <property type="term" value="F:exonuclease activity"/>
    <property type="evidence" value="ECO:0007669"/>
    <property type="project" value="UniProtKB-KW"/>
</dbReference>
<dbReference type="GO" id="GO:0046872">
    <property type="term" value="F:metal ion binding"/>
    <property type="evidence" value="ECO:0007669"/>
    <property type="project" value="UniProtKB-KW"/>
</dbReference>
<dbReference type="GO" id="GO:0051607">
    <property type="term" value="P:defense response to virus"/>
    <property type="evidence" value="ECO:0007669"/>
    <property type="project" value="UniProtKB-KW"/>
</dbReference>
<dbReference type="CDD" id="cd10013">
    <property type="entry name" value="Cas3''_I"/>
    <property type="match status" value="1"/>
</dbReference>
<dbReference type="Gene3D" id="1.10.3210.30">
    <property type="match status" value="1"/>
</dbReference>
<dbReference type="InterPro" id="IPR006483">
    <property type="entry name" value="CRISPR-assoc_Cas3_HD"/>
</dbReference>
<dbReference type="InterPro" id="IPR038257">
    <property type="entry name" value="CRISPR-assoc_Cas3_HD_sf"/>
</dbReference>
<dbReference type="NCBIfam" id="TIGR01596">
    <property type="entry name" value="cas3_HD"/>
    <property type="match status" value="1"/>
</dbReference>
<dbReference type="Pfam" id="PF18019">
    <property type="entry name" value="Cas3_HD"/>
    <property type="match status" value="1"/>
</dbReference>
<dbReference type="PROSITE" id="PS51643">
    <property type="entry name" value="HD_CAS3"/>
    <property type="match status" value="1"/>
</dbReference>